<dbReference type="EC" id="6.2.1.5" evidence="1"/>
<dbReference type="EMBL" id="CP000606">
    <property type="protein sequence ID" value="ABO23524.1"/>
    <property type="molecule type" value="Genomic_DNA"/>
</dbReference>
<dbReference type="RefSeq" id="WP_011865456.1">
    <property type="nucleotide sequence ID" value="NC_009092.1"/>
</dbReference>
<dbReference type="SMR" id="A3QDH6"/>
<dbReference type="STRING" id="323850.Shew_1657"/>
<dbReference type="KEGG" id="slo:Shew_1657"/>
<dbReference type="eggNOG" id="COG0045">
    <property type="taxonomic scope" value="Bacteria"/>
</dbReference>
<dbReference type="HOGENOM" id="CLU_037430_0_2_6"/>
<dbReference type="OrthoDB" id="9802602at2"/>
<dbReference type="UniPathway" id="UPA00223">
    <property type="reaction ID" value="UER00999"/>
</dbReference>
<dbReference type="Proteomes" id="UP000001558">
    <property type="component" value="Chromosome"/>
</dbReference>
<dbReference type="GO" id="GO:0005829">
    <property type="term" value="C:cytosol"/>
    <property type="evidence" value="ECO:0007669"/>
    <property type="project" value="TreeGrafter"/>
</dbReference>
<dbReference type="GO" id="GO:0042709">
    <property type="term" value="C:succinate-CoA ligase complex"/>
    <property type="evidence" value="ECO:0007669"/>
    <property type="project" value="TreeGrafter"/>
</dbReference>
<dbReference type="GO" id="GO:0005524">
    <property type="term" value="F:ATP binding"/>
    <property type="evidence" value="ECO:0007669"/>
    <property type="project" value="UniProtKB-UniRule"/>
</dbReference>
<dbReference type="GO" id="GO:0000287">
    <property type="term" value="F:magnesium ion binding"/>
    <property type="evidence" value="ECO:0007669"/>
    <property type="project" value="UniProtKB-UniRule"/>
</dbReference>
<dbReference type="GO" id="GO:0004775">
    <property type="term" value="F:succinate-CoA ligase (ADP-forming) activity"/>
    <property type="evidence" value="ECO:0007669"/>
    <property type="project" value="UniProtKB-UniRule"/>
</dbReference>
<dbReference type="GO" id="GO:0004776">
    <property type="term" value="F:succinate-CoA ligase (GDP-forming) activity"/>
    <property type="evidence" value="ECO:0007669"/>
    <property type="project" value="RHEA"/>
</dbReference>
<dbReference type="GO" id="GO:0006104">
    <property type="term" value="P:succinyl-CoA metabolic process"/>
    <property type="evidence" value="ECO:0007669"/>
    <property type="project" value="TreeGrafter"/>
</dbReference>
<dbReference type="GO" id="GO:0006099">
    <property type="term" value="P:tricarboxylic acid cycle"/>
    <property type="evidence" value="ECO:0007669"/>
    <property type="project" value="UniProtKB-UniRule"/>
</dbReference>
<dbReference type="FunFam" id="3.30.1490.20:FF:000002">
    <property type="entry name" value="Succinate--CoA ligase [ADP-forming] subunit beta"/>
    <property type="match status" value="1"/>
</dbReference>
<dbReference type="FunFam" id="3.30.470.20:FF:000002">
    <property type="entry name" value="Succinate--CoA ligase [ADP-forming] subunit beta"/>
    <property type="match status" value="1"/>
</dbReference>
<dbReference type="FunFam" id="3.40.50.261:FF:000001">
    <property type="entry name" value="Succinate--CoA ligase [ADP-forming] subunit beta"/>
    <property type="match status" value="1"/>
</dbReference>
<dbReference type="Gene3D" id="3.30.1490.20">
    <property type="entry name" value="ATP-grasp fold, A domain"/>
    <property type="match status" value="1"/>
</dbReference>
<dbReference type="Gene3D" id="3.30.470.20">
    <property type="entry name" value="ATP-grasp fold, B domain"/>
    <property type="match status" value="1"/>
</dbReference>
<dbReference type="Gene3D" id="3.40.50.261">
    <property type="entry name" value="Succinyl-CoA synthetase domains"/>
    <property type="match status" value="1"/>
</dbReference>
<dbReference type="HAMAP" id="MF_00558">
    <property type="entry name" value="Succ_CoA_beta"/>
    <property type="match status" value="1"/>
</dbReference>
<dbReference type="InterPro" id="IPR011761">
    <property type="entry name" value="ATP-grasp"/>
</dbReference>
<dbReference type="InterPro" id="IPR013650">
    <property type="entry name" value="ATP-grasp_succ-CoA_synth-type"/>
</dbReference>
<dbReference type="InterPro" id="IPR013815">
    <property type="entry name" value="ATP_grasp_subdomain_1"/>
</dbReference>
<dbReference type="InterPro" id="IPR017866">
    <property type="entry name" value="Succ-CoA_synthase_bsu_CS"/>
</dbReference>
<dbReference type="InterPro" id="IPR005811">
    <property type="entry name" value="SUCC_ACL_C"/>
</dbReference>
<dbReference type="InterPro" id="IPR005809">
    <property type="entry name" value="Succ_CoA_ligase-like_bsu"/>
</dbReference>
<dbReference type="InterPro" id="IPR016102">
    <property type="entry name" value="Succinyl-CoA_synth-like"/>
</dbReference>
<dbReference type="NCBIfam" id="NF001913">
    <property type="entry name" value="PRK00696.1"/>
    <property type="match status" value="1"/>
</dbReference>
<dbReference type="NCBIfam" id="TIGR01016">
    <property type="entry name" value="sucCoAbeta"/>
    <property type="match status" value="1"/>
</dbReference>
<dbReference type="PANTHER" id="PTHR11815:SF10">
    <property type="entry name" value="SUCCINATE--COA LIGASE [GDP-FORMING] SUBUNIT BETA, MITOCHONDRIAL"/>
    <property type="match status" value="1"/>
</dbReference>
<dbReference type="PANTHER" id="PTHR11815">
    <property type="entry name" value="SUCCINYL-COA SYNTHETASE BETA CHAIN"/>
    <property type="match status" value="1"/>
</dbReference>
<dbReference type="Pfam" id="PF08442">
    <property type="entry name" value="ATP-grasp_2"/>
    <property type="match status" value="1"/>
</dbReference>
<dbReference type="Pfam" id="PF00549">
    <property type="entry name" value="Ligase_CoA"/>
    <property type="match status" value="1"/>
</dbReference>
<dbReference type="PIRSF" id="PIRSF001554">
    <property type="entry name" value="SucCS_beta"/>
    <property type="match status" value="1"/>
</dbReference>
<dbReference type="SUPFAM" id="SSF56059">
    <property type="entry name" value="Glutathione synthetase ATP-binding domain-like"/>
    <property type="match status" value="1"/>
</dbReference>
<dbReference type="SUPFAM" id="SSF52210">
    <property type="entry name" value="Succinyl-CoA synthetase domains"/>
    <property type="match status" value="1"/>
</dbReference>
<dbReference type="PROSITE" id="PS50975">
    <property type="entry name" value="ATP_GRASP"/>
    <property type="match status" value="1"/>
</dbReference>
<dbReference type="PROSITE" id="PS01217">
    <property type="entry name" value="SUCCINYL_COA_LIG_3"/>
    <property type="match status" value="1"/>
</dbReference>
<accession>A3QDH6</accession>
<keyword id="KW-0067">ATP-binding</keyword>
<keyword id="KW-0436">Ligase</keyword>
<keyword id="KW-0460">Magnesium</keyword>
<keyword id="KW-0479">Metal-binding</keyword>
<keyword id="KW-0547">Nucleotide-binding</keyword>
<keyword id="KW-1185">Reference proteome</keyword>
<keyword id="KW-0816">Tricarboxylic acid cycle</keyword>
<sequence>MNLHEYQAKALFAEYGLPVSEGYACDTPQEAVEAAGHIGGDMWVVKCQVHAGGRGKAGGVKVTGDKEEIRAFAEHWLGKNLVTYQTDEKGQPVAKILVESCTDIANELYLGAVVDRATRRVVFMASTEGGVEIETVAEETPELIHKAIIDPLTGPQPYQARDLGFKLGLNPTQMKQFTKVFMGLATMFTDHDFALLEINPLVITTEGNIHCLDGKIGIDGNALFRQPKIRDMHDPSQDDAREAHAAKFELNYVALDGNVGCMVNGAGLAMGTMDIVNLHGGKPANFLDVGGGATKERVAEAFKIILSDANVKAVLVNIFGGIVRCDMIAEGIIGAVKEVGVEVPVVVRLEGTNADLGREVLANSGLDIIAAESLTDAAVKVVAAAEGK</sequence>
<comment type="function">
    <text evidence="1">Succinyl-CoA synthetase functions in the citric acid cycle (TCA), coupling the hydrolysis of succinyl-CoA to the synthesis of either ATP or GTP and thus represents the only step of substrate-level phosphorylation in the TCA. The beta subunit provides nucleotide specificity of the enzyme and binds the substrate succinate, while the binding sites for coenzyme A and phosphate are found in the alpha subunit.</text>
</comment>
<comment type="catalytic activity">
    <reaction evidence="1">
        <text>succinate + ATP + CoA = succinyl-CoA + ADP + phosphate</text>
        <dbReference type="Rhea" id="RHEA:17661"/>
        <dbReference type="ChEBI" id="CHEBI:30031"/>
        <dbReference type="ChEBI" id="CHEBI:30616"/>
        <dbReference type="ChEBI" id="CHEBI:43474"/>
        <dbReference type="ChEBI" id="CHEBI:57287"/>
        <dbReference type="ChEBI" id="CHEBI:57292"/>
        <dbReference type="ChEBI" id="CHEBI:456216"/>
        <dbReference type="EC" id="6.2.1.5"/>
    </reaction>
    <physiologicalReaction direction="right-to-left" evidence="1">
        <dbReference type="Rhea" id="RHEA:17663"/>
    </physiologicalReaction>
</comment>
<comment type="catalytic activity">
    <reaction evidence="1">
        <text>GTP + succinate + CoA = succinyl-CoA + GDP + phosphate</text>
        <dbReference type="Rhea" id="RHEA:22120"/>
        <dbReference type="ChEBI" id="CHEBI:30031"/>
        <dbReference type="ChEBI" id="CHEBI:37565"/>
        <dbReference type="ChEBI" id="CHEBI:43474"/>
        <dbReference type="ChEBI" id="CHEBI:57287"/>
        <dbReference type="ChEBI" id="CHEBI:57292"/>
        <dbReference type="ChEBI" id="CHEBI:58189"/>
    </reaction>
    <physiologicalReaction direction="right-to-left" evidence="1">
        <dbReference type="Rhea" id="RHEA:22122"/>
    </physiologicalReaction>
</comment>
<comment type="cofactor">
    <cofactor evidence="1">
        <name>Mg(2+)</name>
        <dbReference type="ChEBI" id="CHEBI:18420"/>
    </cofactor>
    <text evidence="1">Binds 1 Mg(2+) ion per subunit.</text>
</comment>
<comment type="pathway">
    <text evidence="1">Carbohydrate metabolism; tricarboxylic acid cycle; succinate from succinyl-CoA (ligase route): step 1/1.</text>
</comment>
<comment type="subunit">
    <text evidence="1">Heterotetramer of two alpha and two beta subunits.</text>
</comment>
<comment type="similarity">
    <text evidence="1">Belongs to the succinate/malate CoA ligase beta subunit family.</text>
</comment>
<name>SUCC_SHELP</name>
<reference key="1">
    <citation type="submission" date="2007-03" db="EMBL/GenBank/DDBJ databases">
        <title>Complete sequence of Shewanella loihica PV-4.</title>
        <authorList>
            <consortium name="US DOE Joint Genome Institute"/>
            <person name="Copeland A."/>
            <person name="Lucas S."/>
            <person name="Lapidus A."/>
            <person name="Barry K."/>
            <person name="Detter J.C."/>
            <person name="Glavina del Rio T."/>
            <person name="Hammon N."/>
            <person name="Israni S."/>
            <person name="Dalin E."/>
            <person name="Tice H."/>
            <person name="Pitluck S."/>
            <person name="Chain P."/>
            <person name="Malfatti S."/>
            <person name="Shin M."/>
            <person name="Vergez L."/>
            <person name="Schmutz J."/>
            <person name="Larimer F."/>
            <person name="Land M."/>
            <person name="Hauser L."/>
            <person name="Kyrpides N."/>
            <person name="Mikhailova N."/>
            <person name="Romine M.F."/>
            <person name="Serres G."/>
            <person name="Fredrickson J."/>
            <person name="Tiedje J."/>
            <person name="Richardson P."/>
        </authorList>
    </citation>
    <scope>NUCLEOTIDE SEQUENCE [LARGE SCALE GENOMIC DNA]</scope>
    <source>
        <strain>ATCC BAA-1088 / PV-4</strain>
    </source>
</reference>
<evidence type="ECO:0000255" key="1">
    <source>
        <dbReference type="HAMAP-Rule" id="MF_00558"/>
    </source>
</evidence>
<gene>
    <name evidence="1" type="primary">sucC</name>
    <name type="ordered locus">Shew_1657</name>
</gene>
<protein>
    <recommendedName>
        <fullName evidence="1">Succinate--CoA ligase [ADP-forming] subunit beta</fullName>
        <ecNumber evidence="1">6.2.1.5</ecNumber>
    </recommendedName>
    <alternativeName>
        <fullName evidence="1">Succinyl-CoA synthetase subunit beta</fullName>
        <shortName evidence="1">SCS-beta</shortName>
    </alternativeName>
</protein>
<proteinExistence type="inferred from homology"/>
<feature type="chain" id="PRO_1000082224" description="Succinate--CoA ligase [ADP-forming] subunit beta">
    <location>
        <begin position="1"/>
        <end position="388"/>
    </location>
</feature>
<feature type="domain" description="ATP-grasp" evidence="1">
    <location>
        <begin position="9"/>
        <end position="244"/>
    </location>
</feature>
<feature type="binding site" evidence="1">
    <location>
        <position position="46"/>
    </location>
    <ligand>
        <name>ATP</name>
        <dbReference type="ChEBI" id="CHEBI:30616"/>
    </ligand>
</feature>
<feature type="binding site" evidence="1">
    <location>
        <begin position="53"/>
        <end position="55"/>
    </location>
    <ligand>
        <name>ATP</name>
        <dbReference type="ChEBI" id="CHEBI:30616"/>
    </ligand>
</feature>
<feature type="binding site" evidence="1">
    <location>
        <position position="99"/>
    </location>
    <ligand>
        <name>ATP</name>
        <dbReference type="ChEBI" id="CHEBI:30616"/>
    </ligand>
</feature>
<feature type="binding site" evidence="1">
    <location>
        <position position="102"/>
    </location>
    <ligand>
        <name>ATP</name>
        <dbReference type="ChEBI" id="CHEBI:30616"/>
    </ligand>
</feature>
<feature type="binding site" evidence="1">
    <location>
        <position position="107"/>
    </location>
    <ligand>
        <name>ATP</name>
        <dbReference type="ChEBI" id="CHEBI:30616"/>
    </ligand>
</feature>
<feature type="binding site" evidence="1">
    <location>
        <position position="199"/>
    </location>
    <ligand>
        <name>Mg(2+)</name>
        <dbReference type="ChEBI" id="CHEBI:18420"/>
    </ligand>
</feature>
<feature type="binding site" evidence="1">
    <location>
        <position position="213"/>
    </location>
    <ligand>
        <name>Mg(2+)</name>
        <dbReference type="ChEBI" id="CHEBI:18420"/>
    </ligand>
</feature>
<feature type="binding site" evidence="1">
    <location>
        <position position="264"/>
    </location>
    <ligand>
        <name>substrate</name>
        <note>ligand shared with subunit alpha</note>
    </ligand>
</feature>
<feature type="binding site" evidence="1">
    <location>
        <begin position="321"/>
        <end position="323"/>
    </location>
    <ligand>
        <name>substrate</name>
        <note>ligand shared with subunit alpha</note>
    </ligand>
</feature>
<organism>
    <name type="scientific">Shewanella loihica (strain ATCC BAA-1088 / PV-4)</name>
    <dbReference type="NCBI Taxonomy" id="323850"/>
    <lineage>
        <taxon>Bacteria</taxon>
        <taxon>Pseudomonadati</taxon>
        <taxon>Pseudomonadota</taxon>
        <taxon>Gammaproteobacteria</taxon>
        <taxon>Alteromonadales</taxon>
        <taxon>Shewanellaceae</taxon>
        <taxon>Shewanella</taxon>
    </lineage>
</organism>